<proteinExistence type="evidence at protein level"/>
<comment type="function">
    <text>Implicated in mitochondrial protein import and macromolecular assembly. May facilitate the correct folding of imported proteins. May also prevent misfolding and promote the refolding and proper assembly of unfolded polypeptides generated under stress conditions in the mitochondrial matrix.</text>
</comment>
<comment type="subcellular location">
    <subcellularLocation>
        <location evidence="1 4">Mitochondrion</location>
    </subcellularLocation>
</comment>
<comment type="induction">
    <text>By heat shock.</text>
</comment>
<comment type="similarity">
    <text evidence="3">Belongs to the chaperonin (HSP60) family.</text>
</comment>
<accession>P29197</accession>
<accession>Q9LIQ8</accession>
<sequence length="577" mass="61281">MYRFASNLASKARIAQNARQVSSRMSWSRNYAAKEIKFGVEARALMLKGVEDLADAVKVTMGPKGRNVVIEQSWGAPKVTKDGVTVAKSIEFKDKIKNVGASLVKQVANATNDVAGDGTTCATVLTRAIFAEGCKSVAAGMNAMDLRRGISMAVDAVVTNLKSKARMISTSEEIAQVGTISANGEREIGELIAKAMEKVGKEGVITIQDGKTLFNELEVVEGMKLDRGYTSPYFITNQKTQKCELDDPLILIHEKKISSINSIVKVLELALKRQRPLLIVSEDVESDALATLILNKLRAGIKVCAIKAPGFGENRKANLQDLAALTGGEVITDELGMNLEKVDLSMLGTCKKVTVSKDDTVILDGAGDKKGIEERCEQIRSAIELSTSDYDKEKLQERLAKLSGGVAVLKIGGASEAEVGEKKDRVTDALNATKAAVEEGILPGGGVALLYAARELEKLPTANFDQKIGVQIIQNALKTPVYTIASNAGVEGAVIVGKLLEQDNPDLGYDAAKGEYVDMVKAGIIDPLKVIRTALVDAASVSSLLTTTEAVVVDLPKDESESGAAGAGMGGMGGMDY</sequence>
<gene>
    <name type="primary">CPN60</name>
    <name type="ordered locus">At3g23990</name>
    <name type="ORF">F14O13.18</name>
</gene>
<keyword id="KW-0067">ATP-binding</keyword>
<keyword id="KW-0143">Chaperone</keyword>
<keyword id="KW-0496">Mitochondrion</keyword>
<keyword id="KW-0547">Nucleotide-binding</keyword>
<keyword id="KW-0597">Phosphoprotein</keyword>
<keyword id="KW-1185">Reference proteome</keyword>
<keyword id="KW-0346">Stress response</keyword>
<keyword id="KW-0809">Transit peptide</keyword>
<organism>
    <name type="scientific">Arabidopsis thaliana</name>
    <name type="common">Mouse-ear cress</name>
    <dbReference type="NCBI Taxonomy" id="3702"/>
    <lineage>
        <taxon>Eukaryota</taxon>
        <taxon>Viridiplantae</taxon>
        <taxon>Streptophyta</taxon>
        <taxon>Embryophyta</taxon>
        <taxon>Tracheophyta</taxon>
        <taxon>Spermatophyta</taxon>
        <taxon>Magnoliopsida</taxon>
        <taxon>eudicotyledons</taxon>
        <taxon>Gunneridae</taxon>
        <taxon>Pentapetalae</taxon>
        <taxon>rosids</taxon>
        <taxon>malvids</taxon>
        <taxon>Brassicales</taxon>
        <taxon>Brassicaceae</taxon>
        <taxon>Camelineae</taxon>
        <taxon>Arabidopsis</taxon>
    </lineage>
</organism>
<protein>
    <recommendedName>
        <fullName>Chaperonin CPN60, mitochondrial</fullName>
    </recommendedName>
    <alternativeName>
        <fullName>HSP60</fullName>
    </alternativeName>
</protein>
<evidence type="ECO:0000269" key="1">
    <source>
    </source>
</evidence>
<evidence type="ECO:0000269" key="2">
    <source>
    </source>
</evidence>
<evidence type="ECO:0000305" key="3"/>
<evidence type="ECO:0000305" key="4">
    <source>
    </source>
</evidence>
<evidence type="ECO:0007744" key="5">
    <source>
    </source>
</evidence>
<name>CH60A_ARATH</name>
<reference key="1">
    <citation type="journal article" date="1992" name="Plant Mol. Biol.">
        <title>cDNA clones encoding Arabidopsis thaliana and Zea mays mitochondrial chaperonin HSP60 and gene expression during seed germination and heat shock.</title>
        <authorList>
            <person name="Prasad T.K."/>
            <person name="Stewart C.R."/>
        </authorList>
    </citation>
    <scope>NUCLEOTIDE SEQUENCE [MRNA]</scope>
    <source>
        <strain>cv. Columbia</strain>
        <tissue>Seed</tissue>
    </source>
</reference>
<reference key="2">
    <citation type="journal article" date="2000" name="DNA Res.">
        <title>Structural analysis of Arabidopsis thaliana chromosome 3. II. Sequence features of the 4,251,695 bp regions covered by 90 P1, TAC and BAC clones.</title>
        <authorList>
            <person name="Kaneko T."/>
            <person name="Katoh T."/>
            <person name="Sato S."/>
            <person name="Nakamura Y."/>
            <person name="Asamizu E."/>
            <person name="Tabata S."/>
        </authorList>
    </citation>
    <scope>NUCLEOTIDE SEQUENCE [LARGE SCALE GENOMIC DNA]</scope>
    <source>
        <strain>cv. Columbia</strain>
    </source>
</reference>
<reference key="3">
    <citation type="journal article" date="2017" name="Plant J.">
        <title>Araport11: a complete reannotation of the Arabidopsis thaliana reference genome.</title>
        <authorList>
            <person name="Cheng C.Y."/>
            <person name="Krishnakumar V."/>
            <person name="Chan A.P."/>
            <person name="Thibaud-Nissen F."/>
            <person name="Schobel S."/>
            <person name="Town C.D."/>
        </authorList>
    </citation>
    <scope>GENOME REANNOTATION</scope>
    <source>
        <strain>cv. Columbia</strain>
    </source>
</reference>
<reference key="4">
    <citation type="journal article" date="2003" name="Science">
        <title>Empirical analysis of transcriptional activity in the Arabidopsis genome.</title>
        <authorList>
            <person name="Yamada K."/>
            <person name="Lim J."/>
            <person name="Dale J.M."/>
            <person name="Chen H."/>
            <person name="Shinn P."/>
            <person name="Palm C.J."/>
            <person name="Southwick A.M."/>
            <person name="Wu H.C."/>
            <person name="Kim C.J."/>
            <person name="Nguyen M."/>
            <person name="Pham P.K."/>
            <person name="Cheuk R.F."/>
            <person name="Karlin-Newmann G."/>
            <person name="Liu S.X."/>
            <person name="Lam B."/>
            <person name="Sakano H."/>
            <person name="Wu T."/>
            <person name="Yu G."/>
            <person name="Miranda M."/>
            <person name="Quach H.L."/>
            <person name="Tripp M."/>
            <person name="Chang C.H."/>
            <person name="Lee J.M."/>
            <person name="Toriumi M.J."/>
            <person name="Chan M.M."/>
            <person name="Tang C.C."/>
            <person name="Onodera C.S."/>
            <person name="Deng J.M."/>
            <person name="Akiyama K."/>
            <person name="Ansari Y."/>
            <person name="Arakawa T."/>
            <person name="Banh J."/>
            <person name="Banno F."/>
            <person name="Bowser L."/>
            <person name="Brooks S.Y."/>
            <person name="Carninci P."/>
            <person name="Chao Q."/>
            <person name="Choy N."/>
            <person name="Enju A."/>
            <person name="Goldsmith A.D."/>
            <person name="Gurjal M."/>
            <person name="Hansen N.F."/>
            <person name="Hayashizaki Y."/>
            <person name="Johnson-Hopson C."/>
            <person name="Hsuan V.W."/>
            <person name="Iida K."/>
            <person name="Karnes M."/>
            <person name="Khan S."/>
            <person name="Koesema E."/>
            <person name="Ishida J."/>
            <person name="Jiang P.X."/>
            <person name="Jones T."/>
            <person name="Kawai J."/>
            <person name="Kamiya A."/>
            <person name="Meyers C."/>
            <person name="Nakajima M."/>
            <person name="Narusaka M."/>
            <person name="Seki M."/>
            <person name="Sakurai T."/>
            <person name="Satou M."/>
            <person name="Tamse R."/>
            <person name="Vaysberg M."/>
            <person name="Wallender E.K."/>
            <person name="Wong C."/>
            <person name="Yamamura Y."/>
            <person name="Yuan S."/>
            <person name="Shinozaki K."/>
            <person name="Davis R.W."/>
            <person name="Theologis A."/>
            <person name="Ecker J.R."/>
        </authorList>
    </citation>
    <scope>NUCLEOTIDE SEQUENCE [LARGE SCALE MRNA]</scope>
    <source>
        <strain>cv. Columbia</strain>
    </source>
</reference>
<reference key="5">
    <citation type="journal article" date="2004" name="Plant Cell">
        <title>Experimental analysis of the Arabidopsis mitochondrial proteome highlights signaling and regulatory components, provides assessment of targeting prediction programs, and indicates plant-specific mitochondrial proteins.</title>
        <authorList>
            <person name="Heazlewood J.L."/>
            <person name="Tonti-Filippini J.S."/>
            <person name="Gout A.M."/>
            <person name="Day D.A."/>
            <person name="Whelan J."/>
            <person name="Millar A.H."/>
        </authorList>
    </citation>
    <scope>IDENTIFICATION BY MASS SPECTROMETRY</scope>
    <scope>SUBCELLULAR LOCATION [LARGE SCALE ANALYSIS]</scope>
    <source>
        <strain>cv. Landsberg erecta</strain>
    </source>
</reference>
<reference key="6">
    <citation type="journal article" date="2012" name="J. Proteome Res.">
        <title>Identification of phosphoproteins in Arabidopsis thaliana leaves using polyethylene glycol fractionation, immobilized metal-ion affinity chromatography, two-dimensional gel electrophoresis and mass spectrometry.</title>
        <authorList>
            <person name="Aryal U.K."/>
            <person name="Krochko J.E."/>
            <person name="Ross A.R."/>
        </authorList>
    </citation>
    <scope>PHOSPHORYLATION [LARGE SCALE ANALYSIS] AT SER-151</scope>
    <scope>IDENTIFICATION BY MASS SPECTROMETRY [LARGE SCALE ANALYSIS]</scope>
</reference>
<reference key="7">
    <citation type="journal article" date="2015" name="J. Exp. Bot.">
        <title>Identification of cleavage sites and substrate proteins for two mitochondrial intermediate peptidases in Arabidopsis thaliana.</title>
        <authorList>
            <person name="Carrie C."/>
            <person name="Venne A.S."/>
            <person name="Zahedi R.P."/>
            <person name="Soll J."/>
        </authorList>
    </citation>
    <scope>IDENTIFICATION BY MASS SPECTROMETRY</scope>
    <scope>CLEAVAGE OF TRANSIT PEPTIDE AFTER TYR-31</scope>
</reference>
<dbReference type="EMBL" id="Z11547">
    <property type="protein sequence ID" value="CAA77646.1"/>
    <property type="molecule type" value="mRNA"/>
</dbReference>
<dbReference type="EMBL" id="AP001297">
    <property type="protein sequence ID" value="BAB03017.1"/>
    <property type="molecule type" value="Genomic_DNA"/>
</dbReference>
<dbReference type="EMBL" id="CP002686">
    <property type="protein sequence ID" value="AEE76842.1"/>
    <property type="molecule type" value="Genomic_DNA"/>
</dbReference>
<dbReference type="EMBL" id="AY099594">
    <property type="protein sequence ID" value="AAM20445.1"/>
    <property type="molecule type" value="mRNA"/>
</dbReference>
<dbReference type="EMBL" id="BT010398">
    <property type="protein sequence ID" value="AAQ56841.1"/>
    <property type="molecule type" value="mRNA"/>
</dbReference>
<dbReference type="PIR" id="S20876">
    <property type="entry name" value="S20876"/>
</dbReference>
<dbReference type="SMR" id="P29197"/>
<dbReference type="BioGRID" id="7315">
    <property type="interactions" value="73"/>
</dbReference>
<dbReference type="FunCoup" id="P29197">
    <property type="interactions" value="3024"/>
</dbReference>
<dbReference type="STRING" id="3702.P29197"/>
<dbReference type="iPTMnet" id="P29197"/>
<dbReference type="MetOSite" id="P29197"/>
<dbReference type="PaxDb" id="3702-AT3G23990.1"/>
<dbReference type="ProteomicsDB" id="220391"/>
<dbReference type="EnsemblPlants" id="AT3G23990.1">
    <property type="protein sequence ID" value="AT3G23990.1"/>
    <property type="gene ID" value="AT3G23990"/>
</dbReference>
<dbReference type="Gramene" id="AT3G23990.1">
    <property type="protein sequence ID" value="AT3G23990.1"/>
    <property type="gene ID" value="AT3G23990"/>
</dbReference>
<dbReference type="KEGG" id="ath:AT3G23990"/>
<dbReference type="Araport" id="AT3G23990"/>
<dbReference type="TAIR" id="AT3G23990">
    <property type="gene designation" value="HSP60"/>
</dbReference>
<dbReference type="eggNOG" id="KOG0356">
    <property type="taxonomic scope" value="Eukaryota"/>
</dbReference>
<dbReference type="HOGENOM" id="CLU_016503_3_0_1"/>
<dbReference type="InParanoid" id="P29197"/>
<dbReference type="OMA" id="TDTDKME"/>
<dbReference type="OrthoDB" id="1733909at2759"/>
<dbReference type="PhylomeDB" id="P29197"/>
<dbReference type="CD-CODE" id="4299E36E">
    <property type="entry name" value="Nucleolus"/>
</dbReference>
<dbReference type="PRO" id="PR:P29197"/>
<dbReference type="Proteomes" id="UP000006548">
    <property type="component" value="Chromosome 3"/>
</dbReference>
<dbReference type="ExpressionAtlas" id="P29197">
    <property type="expression patterns" value="baseline and differential"/>
</dbReference>
<dbReference type="GO" id="GO:0005829">
    <property type="term" value="C:cytosol"/>
    <property type="evidence" value="ECO:0000314"/>
    <property type="project" value="TAIR"/>
</dbReference>
<dbReference type="GO" id="GO:0022626">
    <property type="term" value="C:cytosolic ribosome"/>
    <property type="evidence" value="ECO:0007005"/>
    <property type="project" value="TAIR"/>
</dbReference>
<dbReference type="GO" id="GO:0005759">
    <property type="term" value="C:mitochondrial matrix"/>
    <property type="evidence" value="ECO:0000314"/>
    <property type="project" value="TAIR"/>
</dbReference>
<dbReference type="GO" id="GO:0005739">
    <property type="term" value="C:mitochondrion"/>
    <property type="evidence" value="ECO:0000314"/>
    <property type="project" value="TAIR"/>
</dbReference>
<dbReference type="GO" id="GO:0000325">
    <property type="term" value="C:plant-type vacuole"/>
    <property type="evidence" value="ECO:0007005"/>
    <property type="project" value="TAIR"/>
</dbReference>
<dbReference type="GO" id="GO:0005524">
    <property type="term" value="F:ATP binding"/>
    <property type="evidence" value="ECO:0007005"/>
    <property type="project" value="TAIR"/>
</dbReference>
<dbReference type="GO" id="GO:0140662">
    <property type="term" value="F:ATP-dependent protein folding chaperone"/>
    <property type="evidence" value="ECO:0007669"/>
    <property type="project" value="InterPro"/>
</dbReference>
<dbReference type="GO" id="GO:0005507">
    <property type="term" value="F:copper ion binding"/>
    <property type="evidence" value="ECO:0007005"/>
    <property type="project" value="TAIR"/>
</dbReference>
<dbReference type="GO" id="GO:0003723">
    <property type="term" value="F:RNA binding"/>
    <property type="evidence" value="ECO:0000353"/>
    <property type="project" value="TAIR"/>
</dbReference>
<dbReference type="GO" id="GO:0003735">
    <property type="term" value="F:structural constituent of ribosome"/>
    <property type="evidence" value="ECO:0000314"/>
    <property type="project" value="CAFA"/>
</dbReference>
<dbReference type="GO" id="GO:0000373">
    <property type="term" value="P:Group II intron splicing"/>
    <property type="evidence" value="ECO:0000353"/>
    <property type="project" value="TAIR"/>
</dbReference>
<dbReference type="GO" id="GO:0007005">
    <property type="term" value="P:mitochondrion organization"/>
    <property type="evidence" value="ECO:0000304"/>
    <property type="project" value="TAIR"/>
</dbReference>
<dbReference type="GO" id="GO:0042026">
    <property type="term" value="P:protein refolding"/>
    <property type="evidence" value="ECO:0007669"/>
    <property type="project" value="InterPro"/>
</dbReference>
<dbReference type="GO" id="GO:0009408">
    <property type="term" value="P:response to heat"/>
    <property type="evidence" value="ECO:0000270"/>
    <property type="project" value="TAIR"/>
</dbReference>
<dbReference type="CDD" id="cd03344">
    <property type="entry name" value="GroEL"/>
    <property type="match status" value="1"/>
</dbReference>
<dbReference type="FunFam" id="1.10.560.10:FF:000001">
    <property type="entry name" value="60 kDa chaperonin"/>
    <property type="match status" value="1"/>
</dbReference>
<dbReference type="FunFam" id="3.50.7.10:FF:000001">
    <property type="entry name" value="60 kDa chaperonin"/>
    <property type="match status" value="1"/>
</dbReference>
<dbReference type="Gene3D" id="3.50.7.10">
    <property type="entry name" value="GroEL"/>
    <property type="match status" value="1"/>
</dbReference>
<dbReference type="Gene3D" id="1.10.560.10">
    <property type="entry name" value="GroEL-like equatorial domain"/>
    <property type="match status" value="1"/>
</dbReference>
<dbReference type="Gene3D" id="3.30.260.10">
    <property type="entry name" value="TCP-1-like chaperonin intermediate domain"/>
    <property type="match status" value="1"/>
</dbReference>
<dbReference type="HAMAP" id="MF_00600">
    <property type="entry name" value="CH60"/>
    <property type="match status" value="1"/>
</dbReference>
<dbReference type="InterPro" id="IPR018370">
    <property type="entry name" value="Chaperonin_Cpn60_CS"/>
</dbReference>
<dbReference type="InterPro" id="IPR001844">
    <property type="entry name" value="Cpn60/GroEL"/>
</dbReference>
<dbReference type="InterPro" id="IPR002423">
    <property type="entry name" value="Cpn60/GroEL/TCP-1"/>
</dbReference>
<dbReference type="InterPro" id="IPR027409">
    <property type="entry name" value="GroEL-like_apical_dom_sf"/>
</dbReference>
<dbReference type="InterPro" id="IPR027413">
    <property type="entry name" value="GROEL-like_equatorial_sf"/>
</dbReference>
<dbReference type="InterPro" id="IPR027410">
    <property type="entry name" value="TCP-1-like_intermed_sf"/>
</dbReference>
<dbReference type="NCBIfam" id="TIGR02348">
    <property type="entry name" value="GroEL"/>
    <property type="match status" value="1"/>
</dbReference>
<dbReference type="NCBIfam" id="NF000592">
    <property type="entry name" value="PRK00013.1"/>
    <property type="match status" value="1"/>
</dbReference>
<dbReference type="NCBIfam" id="NF009487">
    <property type="entry name" value="PRK12849.1"/>
    <property type="match status" value="1"/>
</dbReference>
<dbReference type="NCBIfam" id="NF009488">
    <property type="entry name" value="PRK12850.1"/>
    <property type="match status" value="1"/>
</dbReference>
<dbReference type="NCBIfam" id="NF009489">
    <property type="entry name" value="PRK12851.1"/>
    <property type="match status" value="1"/>
</dbReference>
<dbReference type="PANTHER" id="PTHR45633">
    <property type="entry name" value="60 KDA HEAT SHOCK PROTEIN, MITOCHONDRIAL"/>
    <property type="match status" value="1"/>
</dbReference>
<dbReference type="Pfam" id="PF00118">
    <property type="entry name" value="Cpn60_TCP1"/>
    <property type="match status" value="1"/>
</dbReference>
<dbReference type="PRINTS" id="PR00298">
    <property type="entry name" value="CHAPERONIN60"/>
</dbReference>
<dbReference type="SUPFAM" id="SSF52029">
    <property type="entry name" value="GroEL apical domain-like"/>
    <property type="match status" value="1"/>
</dbReference>
<dbReference type="SUPFAM" id="SSF48592">
    <property type="entry name" value="GroEL equatorial domain-like"/>
    <property type="match status" value="1"/>
</dbReference>
<dbReference type="SUPFAM" id="SSF54849">
    <property type="entry name" value="GroEL-intermediate domain like"/>
    <property type="match status" value="1"/>
</dbReference>
<dbReference type="PROSITE" id="PS00296">
    <property type="entry name" value="CHAPERONINS_CPN60"/>
    <property type="match status" value="1"/>
</dbReference>
<feature type="transit peptide" description="Mitochondrion" evidence="2">
    <location>
        <begin position="1"/>
        <end position="31"/>
    </location>
</feature>
<feature type="chain" id="PRO_0000005009" description="Chaperonin CPN60, mitochondrial">
    <location>
        <begin position="32"/>
        <end position="577"/>
    </location>
</feature>
<feature type="modified residue" description="Phosphoserine" evidence="5">
    <location>
        <position position="151"/>
    </location>
</feature>
<feature type="sequence conflict" description="In Ref. 1; CAA77646." evidence="3" ref="1">
    <original>A</original>
    <variation>G</variation>
    <location>
        <position position="567"/>
    </location>
</feature>
<feature type="sequence conflict" description="In Ref. 1; CAA77646." evidence="3" ref="1">
    <original>GG</original>
    <variation>VV</variation>
    <location>
        <begin position="573"/>
        <end position="574"/>
    </location>
</feature>